<feature type="chain" id="PRO_0000051776" description="Cytochrome P450 2L1">
    <location>
        <begin position="1"/>
        <end position="492"/>
    </location>
</feature>
<feature type="binding site" description="axial binding residue" evidence="1">
    <location>
        <position position="436"/>
    </location>
    <ligand>
        <name>heme</name>
        <dbReference type="ChEBI" id="CHEBI:30413"/>
    </ligand>
    <ligandPart>
        <name>Fe</name>
        <dbReference type="ChEBI" id="CHEBI:18248"/>
    </ligandPart>
</feature>
<keyword id="KW-0903">Direct protein sequencing</keyword>
<keyword id="KW-0256">Endoplasmic reticulum</keyword>
<keyword id="KW-0349">Heme</keyword>
<keyword id="KW-0408">Iron</keyword>
<keyword id="KW-0472">Membrane</keyword>
<keyword id="KW-0479">Metal-binding</keyword>
<keyword id="KW-0492">Microsome</keyword>
<keyword id="KW-0503">Monooxygenase</keyword>
<keyword id="KW-0560">Oxidoreductase</keyword>
<organism>
    <name type="scientific">Panulirus argus</name>
    <name type="common">Caribbean spiny lobster</name>
    <name type="synonym">Palinurus argus</name>
    <dbReference type="NCBI Taxonomy" id="6737"/>
    <lineage>
        <taxon>Eukaryota</taxon>
        <taxon>Metazoa</taxon>
        <taxon>Ecdysozoa</taxon>
        <taxon>Arthropoda</taxon>
        <taxon>Crustacea</taxon>
        <taxon>Multicrustacea</taxon>
        <taxon>Malacostraca</taxon>
        <taxon>Eumalacostraca</taxon>
        <taxon>Eucarida</taxon>
        <taxon>Decapoda</taxon>
        <taxon>Pleocyemata</taxon>
        <taxon>Achelata</taxon>
        <taxon>Palinuroidea</taxon>
        <taxon>Palinuridae</taxon>
        <taxon>Panulirus</taxon>
    </lineage>
</organism>
<dbReference type="EC" id="1.14.14.1"/>
<dbReference type="EMBL" id="U44826">
    <property type="protein sequence ID" value="AAB03106.1"/>
    <property type="molecule type" value="mRNA"/>
</dbReference>
<dbReference type="PIR" id="S68856">
    <property type="entry name" value="S68856"/>
</dbReference>
<dbReference type="SMR" id="Q27712"/>
<dbReference type="GO" id="GO:0005789">
    <property type="term" value="C:endoplasmic reticulum membrane"/>
    <property type="evidence" value="ECO:0007669"/>
    <property type="project" value="UniProtKB-SubCell"/>
</dbReference>
<dbReference type="GO" id="GO:0020037">
    <property type="term" value="F:heme binding"/>
    <property type="evidence" value="ECO:0007669"/>
    <property type="project" value="InterPro"/>
</dbReference>
<dbReference type="GO" id="GO:0005506">
    <property type="term" value="F:iron ion binding"/>
    <property type="evidence" value="ECO:0007669"/>
    <property type="project" value="InterPro"/>
</dbReference>
<dbReference type="GO" id="GO:0016712">
    <property type="term" value="F:oxidoreductase activity, acting on paired donors, with incorporation or reduction of molecular oxygen, reduced flavin or flavoprotein as one donor, and incorporation of one atom of oxygen"/>
    <property type="evidence" value="ECO:0007669"/>
    <property type="project" value="UniProtKB-EC"/>
</dbReference>
<dbReference type="GO" id="GO:0008395">
    <property type="term" value="F:steroid hydroxylase activity"/>
    <property type="evidence" value="ECO:0007669"/>
    <property type="project" value="TreeGrafter"/>
</dbReference>
<dbReference type="GO" id="GO:0006082">
    <property type="term" value="P:organic acid metabolic process"/>
    <property type="evidence" value="ECO:0007669"/>
    <property type="project" value="TreeGrafter"/>
</dbReference>
<dbReference type="GO" id="GO:0006805">
    <property type="term" value="P:xenobiotic metabolic process"/>
    <property type="evidence" value="ECO:0007669"/>
    <property type="project" value="TreeGrafter"/>
</dbReference>
<dbReference type="CDD" id="cd20651">
    <property type="entry name" value="CYP15A1-like"/>
    <property type="match status" value="1"/>
</dbReference>
<dbReference type="FunFam" id="1.10.630.10:FF:000036">
    <property type="entry name" value="CYtochrome P450 family"/>
    <property type="match status" value="1"/>
</dbReference>
<dbReference type="Gene3D" id="1.10.630.10">
    <property type="entry name" value="Cytochrome P450"/>
    <property type="match status" value="1"/>
</dbReference>
<dbReference type="InterPro" id="IPR001128">
    <property type="entry name" value="Cyt_P450"/>
</dbReference>
<dbReference type="InterPro" id="IPR017972">
    <property type="entry name" value="Cyt_P450_CS"/>
</dbReference>
<dbReference type="InterPro" id="IPR002401">
    <property type="entry name" value="Cyt_P450_E_grp-I"/>
</dbReference>
<dbReference type="InterPro" id="IPR036396">
    <property type="entry name" value="Cyt_P450_sf"/>
</dbReference>
<dbReference type="InterPro" id="IPR050182">
    <property type="entry name" value="Cytochrome_P450_fam2"/>
</dbReference>
<dbReference type="PANTHER" id="PTHR24300:SF403">
    <property type="entry name" value="CYTOCHROME P450 306A1"/>
    <property type="match status" value="1"/>
</dbReference>
<dbReference type="PANTHER" id="PTHR24300">
    <property type="entry name" value="CYTOCHROME P450 508A4-RELATED"/>
    <property type="match status" value="1"/>
</dbReference>
<dbReference type="Pfam" id="PF00067">
    <property type="entry name" value="p450"/>
    <property type="match status" value="1"/>
</dbReference>
<dbReference type="PRINTS" id="PR00463">
    <property type="entry name" value="EP450I"/>
</dbReference>
<dbReference type="PRINTS" id="PR00385">
    <property type="entry name" value="P450"/>
</dbReference>
<dbReference type="SUPFAM" id="SSF48264">
    <property type="entry name" value="Cytochrome P450"/>
    <property type="match status" value="1"/>
</dbReference>
<dbReference type="PROSITE" id="PS00086">
    <property type="entry name" value="CYTOCHROME_P450"/>
    <property type="match status" value="1"/>
</dbReference>
<proteinExistence type="evidence at protein level"/>
<gene>
    <name type="primary">CYP2L1</name>
</gene>
<protein>
    <recommendedName>
        <fullName>Cytochrome P450 2L1</fullName>
        <ecNumber>1.14.14.1</ecNumber>
    </recommendedName>
    <alternativeName>
        <fullName>CYPIIL1</fullName>
    </alternativeName>
</protein>
<accession>Q27712</accession>
<name>CP2L1_PANAR</name>
<evidence type="ECO:0000250" key="1"/>
<evidence type="ECO:0000305" key="2"/>
<comment type="function">
    <text>Efficient in catalyzing the monooxygenation of benzphetamine, aminopyrine, benzo(a)pyrene, progesterone, and testosterone.</text>
</comment>
<comment type="catalytic activity">
    <reaction>
        <text>an organic molecule + reduced [NADPH--hemoprotein reductase] + O2 = an alcohol + oxidized [NADPH--hemoprotein reductase] + H2O + H(+)</text>
        <dbReference type="Rhea" id="RHEA:17149"/>
        <dbReference type="Rhea" id="RHEA-COMP:11964"/>
        <dbReference type="Rhea" id="RHEA-COMP:11965"/>
        <dbReference type="ChEBI" id="CHEBI:15377"/>
        <dbReference type="ChEBI" id="CHEBI:15378"/>
        <dbReference type="ChEBI" id="CHEBI:15379"/>
        <dbReference type="ChEBI" id="CHEBI:30879"/>
        <dbReference type="ChEBI" id="CHEBI:57618"/>
        <dbReference type="ChEBI" id="CHEBI:58210"/>
        <dbReference type="ChEBI" id="CHEBI:142491"/>
        <dbReference type="EC" id="1.14.14.1"/>
    </reaction>
</comment>
<comment type="cofactor">
    <cofactor evidence="1">
        <name>heme</name>
        <dbReference type="ChEBI" id="CHEBI:30413"/>
    </cofactor>
</comment>
<comment type="subcellular location">
    <subcellularLocation>
        <location evidence="1">Endoplasmic reticulum membrane</location>
        <topology evidence="1">Peripheral membrane protein</topology>
    </subcellularLocation>
    <subcellularLocation>
        <location evidence="1">Microsome membrane</location>
        <topology evidence="1">Peripheral membrane protein</topology>
    </subcellularLocation>
</comment>
<comment type="similarity">
    <text evidence="2">Belongs to the cytochrome P450 family.</text>
</comment>
<reference key="1">
    <citation type="journal article" date="1996" name="Arch. Biochem. Biophys.">
        <title>cDNA and protein sequence of a major form of P450, CYP2L, in the hepatopancreas of the spiny lobster, Panulirus argus.</title>
        <authorList>
            <person name="James M.O."/>
            <person name="Boyle S.M."/>
            <person name="Trapido-Rosenthal H.G."/>
            <person name="Smith W.C."/>
            <person name="Greenberg R.M."/>
            <person name="Shiverick K.T."/>
        </authorList>
    </citation>
    <scope>NUCLEOTIDE SEQUENCE [MRNA]</scope>
    <scope>PARTIAL PROTEIN SEQUENCE</scope>
    <source>
        <tissue>Hepatopancreas</tissue>
    </source>
</reference>
<sequence>MLTGALLLLLLVVIVYLLDKKPSGLPPGIWGWPLVGRMPSRSKHLADQVKQLRKKYGDIITWRIGTRVNVFLCNFKLVKTALSKFECSDRPDFYTFKLFGEGNDVGVVFSNGVMWQTHRRFILRQLRDLGMGKSRLEAAIQHEAACLVQELKKHTDQPMPLPKSINLAVLNVIWKLVADHRYSLQDQEGQYFTQLLTTTTDNMQGFALNLFNYLPWLLMITPDFVKNWMGVRVLRDGVCELKDYMKTFIKEHQATLDPSNPKDLLDAYLIDLQERKEDPLSTMNIETVRAVIMDLFGAGTETTSTMIRWTILYLMKYPEVQAKIQREIDAAVPRGTLPSLEHKDKLAYFEATIHEVHRIVSLVPLGVSHYTNQDTELAGYRLPKGTVVMSHLECCHRDPSYWEKPNEFYPEHFLDDQGKFVKREHLVNFSVGRRVCVGESLARMELFVFLSAILQNFTFSAPKGEVLHTEKDPQQMLFSFPKPYQVIIRERE</sequence>